<comment type="function">
    <text evidence="4 5">Binds calcium and phospholipids (PubMed:24992295). Regulates microneme secretion (PubMed:22246776).</text>
</comment>
<comment type="subcellular location">
    <subcellularLocation>
        <location evidence="5">Membrane</location>
        <topology evidence="9">Peripheral membrane protein</topology>
    </subcellularLocation>
    <text evidence="4">Localizes in a punctate manner reminiscent of vesicles.</text>
</comment>
<comment type="developmental stage">
    <text evidence="5">Expressed at all stages of the erythrocytic cycle: ring, trophozoite and schizont (at protein level).</text>
</comment>
<comment type="disruption phenotype">
    <text evidence="4">Conditional knockdown results in decreased invasion efficiency due to incomplete microneme discharge.</text>
</comment>
<feature type="chain" id="PRO_0000461790" description="C2 domain-containing protein">
    <location>
        <begin position="1"/>
        <end position="1846"/>
    </location>
</feature>
<feature type="domain" description="C2" evidence="2">
    <location>
        <begin position="497"/>
        <end position="623"/>
    </location>
</feature>
<feature type="region of interest" description="Disordered" evidence="3">
    <location>
        <begin position="16"/>
        <end position="36"/>
    </location>
</feature>
<feature type="region of interest" description="Disordered" evidence="3">
    <location>
        <begin position="1193"/>
        <end position="1244"/>
    </location>
</feature>
<feature type="region of interest" description="Disordered" evidence="3">
    <location>
        <begin position="1346"/>
        <end position="1370"/>
    </location>
</feature>
<feature type="region of interest" description="Disordered" evidence="3">
    <location>
        <begin position="1456"/>
        <end position="1635"/>
    </location>
</feature>
<feature type="region of interest" description="Disordered" evidence="3">
    <location>
        <begin position="1652"/>
        <end position="1692"/>
    </location>
</feature>
<feature type="region of interest" description="Disordered" evidence="3">
    <location>
        <begin position="1827"/>
        <end position="1846"/>
    </location>
</feature>
<feature type="coiled-coil region" evidence="1">
    <location>
        <begin position="1349"/>
        <end position="1506"/>
    </location>
</feature>
<feature type="compositionally biased region" description="Basic and acidic residues" evidence="3">
    <location>
        <begin position="17"/>
        <end position="26"/>
    </location>
</feature>
<feature type="compositionally biased region" description="Polar residues" evidence="3">
    <location>
        <begin position="27"/>
        <end position="36"/>
    </location>
</feature>
<feature type="compositionally biased region" description="Basic and acidic residues" evidence="3">
    <location>
        <begin position="1193"/>
        <end position="1211"/>
    </location>
</feature>
<feature type="compositionally biased region" description="Basic and acidic residues" evidence="3">
    <location>
        <begin position="1230"/>
        <end position="1243"/>
    </location>
</feature>
<feature type="compositionally biased region" description="Basic and acidic residues" evidence="3">
    <location>
        <begin position="1456"/>
        <end position="1474"/>
    </location>
</feature>
<feature type="compositionally biased region" description="Basic and acidic residues" evidence="3">
    <location>
        <begin position="1481"/>
        <end position="1629"/>
    </location>
</feature>
<feature type="compositionally biased region" description="Basic and acidic residues" evidence="3">
    <location>
        <begin position="1652"/>
        <end position="1663"/>
    </location>
</feature>
<feature type="compositionally biased region" description="Basic and acidic residues" evidence="3">
    <location>
        <begin position="1670"/>
        <end position="1692"/>
    </location>
</feature>
<feature type="compositionally biased region" description="Basic residues" evidence="3">
    <location>
        <begin position="1834"/>
        <end position="1846"/>
    </location>
</feature>
<proteinExistence type="evidence at protein level"/>
<gene>
    <name evidence="10" type="ORF">PF3D7_1243900</name>
</gene>
<name>DOC2_PLAF7</name>
<evidence type="ECO:0000255" key="1"/>
<evidence type="ECO:0000255" key="2">
    <source>
        <dbReference type="PROSITE-ProRule" id="PRU00041"/>
    </source>
</evidence>
<evidence type="ECO:0000256" key="3">
    <source>
        <dbReference type="SAM" id="MobiDB-lite"/>
    </source>
</evidence>
<evidence type="ECO:0000269" key="4">
    <source>
    </source>
</evidence>
<evidence type="ECO:0000269" key="5">
    <source>
    </source>
</evidence>
<evidence type="ECO:0000303" key="6">
    <source>
    </source>
</evidence>
<evidence type="ECO:0000303" key="7">
    <source>
    </source>
</evidence>
<evidence type="ECO:0000305" key="8"/>
<evidence type="ECO:0000305" key="9">
    <source>
    </source>
</evidence>
<evidence type="ECO:0000312" key="10">
    <source>
        <dbReference type="EMBL" id="CZT99595.1"/>
    </source>
</evidence>
<evidence type="ECO:0000312" key="11">
    <source>
        <dbReference type="Proteomes" id="UP000001450"/>
    </source>
</evidence>
<reference evidence="11" key="1">
    <citation type="journal article" date="2002" name="Nature">
        <title>Genome sequence of the human malaria parasite Plasmodium falciparum.</title>
        <authorList>
            <person name="Gardner M.J."/>
            <person name="Hall N."/>
            <person name="Fung E."/>
            <person name="White O."/>
            <person name="Berriman M."/>
            <person name="Hyman R.W."/>
            <person name="Carlton J.M."/>
            <person name="Pain A."/>
            <person name="Nelson K.E."/>
            <person name="Bowman S."/>
            <person name="Paulsen I.T."/>
            <person name="James K.D."/>
            <person name="Eisen J.A."/>
            <person name="Rutherford K.M."/>
            <person name="Salzberg S.L."/>
            <person name="Craig A."/>
            <person name="Kyes S."/>
            <person name="Chan M.-S."/>
            <person name="Nene V."/>
            <person name="Shallom S.J."/>
            <person name="Suh B."/>
            <person name="Peterson J."/>
            <person name="Angiuoli S."/>
            <person name="Pertea M."/>
            <person name="Allen J."/>
            <person name="Selengut J."/>
            <person name="Haft D."/>
            <person name="Mather M.W."/>
            <person name="Vaidya A.B."/>
            <person name="Martin D.M.A."/>
            <person name="Fairlamb A.H."/>
            <person name="Fraunholz M.J."/>
            <person name="Roos D.S."/>
            <person name="Ralph S.A."/>
            <person name="McFadden G.I."/>
            <person name="Cummings L.M."/>
            <person name="Subramanian G.M."/>
            <person name="Mungall C."/>
            <person name="Venter J.C."/>
            <person name="Carucci D.J."/>
            <person name="Hoffman S.L."/>
            <person name="Newbold C."/>
            <person name="Davis R.W."/>
            <person name="Fraser C.M."/>
            <person name="Barrell B.G."/>
        </authorList>
    </citation>
    <scope>NUCLEOTIDE SEQUENCE [LARGE SCALE GENOMIC DNA]</scope>
    <source>
        <strain evidence="11">3D7</strain>
    </source>
</reference>
<reference evidence="8" key="2">
    <citation type="journal article" date="2012" name="Science">
        <title>A DOC2 protein identified by mutational profiling is essential for apicomplexan parasite exocytosis.</title>
        <authorList>
            <person name="Farrell A."/>
            <person name="Thirugnanam S."/>
            <person name="Lorestani A."/>
            <person name="Dvorin J.D."/>
            <person name="Eidell K.P."/>
            <person name="Ferguson D.J."/>
            <person name="Anderson-White B.R."/>
            <person name="Duraisingh M.T."/>
            <person name="Marth G.T."/>
            <person name="Gubbels M.J."/>
        </authorList>
    </citation>
    <scope>FUNCTION</scope>
    <scope>DISRUPTION PHENOTYPE</scope>
</reference>
<reference evidence="8" key="3">
    <citation type="journal article" date="2014" name="Exp. Parasitol.">
        <title>Plasmodium falciparum double C2 domain protein, PfDOC2, binds to calcium when associated with membranes.</title>
        <authorList>
            <person name="Jean S."/>
            <person name="Zapata-Jenks M.A."/>
            <person name="Farley J.M."/>
            <person name="Tracy E."/>
            <person name="Mayer D.C."/>
        </authorList>
    </citation>
    <scope>FUNCTION</scope>
    <scope>SUBCELLULAR LOCATION</scope>
    <scope>DEVELOPMENTAL STAGE</scope>
</reference>
<sequence length="1846" mass="221637">MILDKFKNIVNLSNSNTEKEEGKNAEINENNDPNTQLAHEPSIVEADEKTFFDEMLGAPQYTYDEFLQVLKNPIEERGDTEDMKKHWGYPRRWKVILWDLHIQNYMNNDFNAFVDFDFGGNREECRIQRGSTMKIYAKGKTKNCLRTPVVTNVATEQKKNMNFRNVFEYRGSYLDLENEKLRIRVWEYKQFTLNKLEGIYEEPLLSFAVGEIYNETTLYKFIKDSRVKRCRLYFQLYFQELYDFELSFLNWSFSDLLSSSYIQAKSYNYLSNKNNVKKRYIDDTSCNIFPHMCKNFKRFHKKKIYRKVRNYDIDKNFSFNTALSDDSDERKNKNDRTIKNLEKLFVRNLTLMQNIEENEDMSYKNLQNINLPNPRVTITLSHTPKGHEGLNIISIEQKSIRFPIWENLGEIYFRGTLRDLDVSYLNIKVEDMSAPKSAREIGTCQISLKGIVDYPYVMHELEAPSWLVKEAKYEGWENKLNEWKLGTVEGKVIINRVPRYRQRGDIYHIDSKQPYLIVHIFNIDKIITVDNIKELDTYVEVSFDETSRRTRLMKKTLSPNYDSQISIPLRFNNKNDINYENLSKKGLIYIDVWGKSEDIVYIGGISISPYEIFFNEKNVRRNKTKLEHIDLETNVKITYDTVVYRGCKKLCFLHDDQRMSNIHFSIWTYPDILGNSTNQKKIVAPVSFNTTMNFPIKLAEKYNKLKKLFMEVLKTIKSIPENCTDVNTSTRFYNYELINQRKEKHFLPTLITSIKSPYCAESMNAIFHYVRCIPFIHKKENIIFTPDFTLQLKGGNALDHSLLLCSLFLGIPVLAFVCFGTLWDKQKHSWVATFEYNDEKNYGIVKFWETTTGNVYILKKRFIDHNRLKGLELKLKESKYKSHLRNGFLQRYENNTDINYIKEQTKRHIKQLFKNRINDIPIGGPSLPYKTIDLIFNHKNIYVNLQHSSPLNIWYDYWKFDFWFPFSSIEYNLQPSFTIKSFTHKMEDMELDKIAKELRTNIEKNINIYRASRNLSTRWNRDETLEIFLQVGLELLHQLNTSRKEDVLLAKLKIEDWKKALYHKVPQSHRLLGFPYHFNTYKSKFISDKLISTLAILESRDRSLCLSLAVCLYSLPGNFISCYIYIITCVKITQRELRKMEIIKEKAQRMAEIKNSQKKKKSSDDQNIDIKTMDDVEEKETFSSTNLDDTLHDEHTDIDTEKKKHEKDNYKNKKIKNTKLKDANIDNEEKDDHHHITDKKVSKSSDLIHSFDKNDISKNTFDKEEFINNLDKDKKYSSFKKGNVVNKKVSIKNEPSINIYEDHKIYDDENISNNIDNMENNQDEIYNLRQGKTIINEFQQVKKPQKYTINEKRDDIKTKKKRSKEKKKQDKLEFEKLIQSNAYFEQEKKKLQEDIKKLEKDKEQFQKEKIRREEKEKQLLLEEKIKLQKEKELFENEKLERKMSYMLKINELEKKKNERNKMEKSYKRMIQKDKEKKKKKESRDKIRRGEEEKMSADENMKEEQKMREEQKVGEEQKVGEEQKVGEEQKLREEQKMREEQKMREEQKMREEQKMREEQKVREEQKMREEQKMREEQKMREEQKVREEQKLREEQKMREEQKMREEQKMREEEKIREEEQMKREKKMRREEKKKRVQEPIKIDEIQVYDIIKNEKMKKKEEKEEKKRKKKKEDIEDKYKIGKEASLDENNNERQIKSKNIQEISDYEYKNIKENKNLNKFDEKLDLNQIYSKASNFYDNQEKKRRTIKVHANRKENSDSTFSHIDDSIKNKKEYLEDSNIARYLYEKRKHDLIGKGNYNFDEPHYGKKMNNVAYQDIKGSNLFKGFIEEPSSKKSPQKKKIVIVRKN</sequence>
<accession>Q8I4Z1</accession>
<keyword id="KW-0106">Calcium</keyword>
<keyword id="KW-0111">Calcium/phospholipid-binding</keyword>
<keyword id="KW-0175">Coiled coil</keyword>
<keyword id="KW-0268">Exocytosis</keyword>
<keyword id="KW-0472">Membrane</keyword>
<keyword id="KW-1185">Reference proteome</keyword>
<organism evidence="11">
    <name type="scientific">Plasmodium falciparum (isolate 3D7)</name>
    <dbReference type="NCBI Taxonomy" id="36329"/>
    <lineage>
        <taxon>Eukaryota</taxon>
        <taxon>Sar</taxon>
        <taxon>Alveolata</taxon>
        <taxon>Apicomplexa</taxon>
        <taxon>Aconoidasida</taxon>
        <taxon>Haemosporida</taxon>
        <taxon>Plasmodiidae</taxon>
        <taxon>Plasmodium</taxon>
        <taxon>Plasmodium (Laverania)</taxon>
    </lineage>
</organism>
<dbReference type="EMBL" id="LN999947">
    <property type="protein sequence ID" value="CZT99595.1"/>
    <property type="molecule type" value="Genomic_DNA"/>
</dbReference>
<dbReference type="RefSeq" id="XP_001350826.1">
    <property type="nucleotide sequence ID" value="XM_001350790.1"/>
</dbReference>
<dbReference type="STRING" id="36329.Q8I4Z1"/>
<dbReference type="PaxDb" id="5833-PFL2110c"/>
<dbReference type="EnsemblProtists" id="CZT99595">
    <property type="protein sequence ID" value="CZT99595"/>
    <property type="gene ID" value="PF3D7_1243900"/>
</dbReference>
<dbReference type="GeneID" id="811474"/>
<dbReference type="KEGG" id="pfa:PF3D7_1243900"/>
<dbReference type="VEuPathDB" id="PlasmoDB:PF3D7_1243900"/>
<dbReference type="HOGENOM" id="CLU_239721_0_0_1"/>
<dbReference type="InParanoid" id="Q8I4Z1"/>
<dbReference type="OMA" id="NIWYDYW"/>
<dbReference type="OrthoDB" id="67700at2759"/>
<dbReference type="PhylomeDB" id="Q8I4Z1"/>
<dbReference type="Proteomes" id="UP000001450">
    <property type="component" value="Chromosome 12"/>
</dbReference>
<dbReference type="GO" id="GO:0031410">
    <property type="term" value="C:cytoplasmic vesicle"/>
    <property type="evidence" value="ECO:0000314"/>
    <property type="project" value="GeneDB"/>
</dbReference>
<dbReference type="GO" id="GO:0020002">
    <property type="term" value="C:host cell plasma membrane"/>
    <property type="evidence" value="ECO:0000314"/>
    <property type="project" value="GeneDB"/>
</dbReference>
<dbReference type="GO" id="GO:0016020">
    <property type="term" value="C:membrane"/>
    <property type="evidence" value="ECO:0007669"/>
    <property type="project" value="UniProtKB-SubCell"/>
</dbReference>
<dbReference type="GO" id="GO:0005544">
    <property type="term" value="F:calcium-dependent phospholipid binding"/>
    <property type="evidence" value="ECO:0000314"/>
    <property type="project" value="GeneDB"/>
</dbReference>
<dbReference type="GO" id="GO:0006887">
    <property type="term" value="P:exocytosis"/>
    <property type="evidence" value="ECO:0007669"/>
    <property type="project" value="UniProtKB-KW"/>
</dbReference>
<dbReference type="GO" id="GO:0044409">
    <property type="term" value="P:symbiont entry into host"/>
    <property type="evidence" value="ECO:0000314"/>
    <property type="project" value="GeneDB"/>
</dbReference>
<dbReference type="CDD" id="cd00030">
    <property type="entry name" value="C2"/>
    <property type="match status" value="1"/>
</dbReference>
<dbReference type="Gene3D" id="2.60.40.150">
    <property type="entry name" value="C2 domain"/>
    <property type="match status" value="1"/>
</dbReference>
<dbReference type="InterPro" id="IPR000008">
    <property type="entry name" value="C2_dom"/>
</dbReference>
<dbReference type="InterPro" id="IPR035892">
    <property type="entry name" value="C2_domain_sf"/>
</dbReference>
<dbReference type="InterPro" id="IPR052299">
    <property type="entry name" value="CEP76"/>
</dbReference>
<dbReference type="InterPro" id="IPR056288">
    <property type="entry name" value="CEP76_C"/>
</dbReference>
<dbReference type="InterPro" id="IPR056290">
    <property type="entry name" value="CEPT76/DRC7_peptidase-like_dom"/>
</dbReference>
<dbReference type="PANTHER" id="PTHR46436">
    <property type="entry name" value="CENTROSOMAL PROTEIN OF 76 KDA"/>
    <property type="match status" value="1"/>
</dbReference>
<dbReference type="PANTHER" id="PTHR46436:SF2">
    <property type="entry name" value="CHROMOSOME UNDETERMINED SCAFFOLD_119, WHOLE GENOME SHOTGUN SEQUENCE"/>
    <property type="match status" value="1"/>
</dbReference>
<dbReference type="Pfam" id="PF00168">
    <property type="entry name" value="C2"/>
    <property type="match status" value="1"/>
</dbReference>
<dbReference type="Pfam" id="PF24652">
    <property type="entry name" value="CEP76_C"/>
    <property type="match status" value="1"/>
</dbReference>
<dbReference type="Pfam" id="PF24656">
    <property type="entry name" value="CEPT76_peptidase"/>
    <property type="match status" value="1"/>
</dbReference>
<dbReference type="SMART" id="SM00239">
    <property type="entry name" value="C2"/>
    <property type="match status" value="2"/>
</dbReference>
<dbReference type="SUPFAM" id="SSF49562">
    <property type="entry name" value="C2 domain (Calcium/lipid-binding domain, CaLB)"/>
    <property type="match status" value="1"/>
</dbReference>
<dbReference type="PROSITE" id="PS50004">
    <property type="entry name" value="C2"/>
    <property type="match status" value="1"/>
</dbReference>
<protein>
    <recommendedName>
        <fullName evidence="8">C2 domain-containing protein</fullName>
        <shortName evidence="7">PfDOC2</shortName>
        <shortName evidence="6">PfDOC2.1</shortName>
    </recommendedName>
</protein>